<proteinExistence type="evidence at protein level"/>
<accession>H6LBB1</accession>
<comment type="function">
    <text evidence="3">The lactate dehydrogenase-Etf complex catalyzes the oxidation of lactate to pyruvate. It uses flavin-based electron confurcation to drive endergonic lactate oxidation with NAD(+) as oxidant at the expense of simultaneous exergonic electron flow from reduced ferredoxin to NAD(+). The electron transfer flavoprotein (Etf) mediates the electron transfer between the different donors and acceptors.</text>
</comment>
<comment type="catalytic activity">
    <reaction evidence="3">
        <text>lactate + 2 reduced [2Fe-2S]-[ferredoxin] + 2 NAD(+) = 2 oxidized [2Fe-2S]-[ferredoxin] + pyruvate + 2 NADH</text>
        <dbReference type="Rhea" id="RHEA:46964"/>
        <dbReference type="Rhea" id="RHEA-COMP:10000"/>
        <dbReference type="Rhea" id="RHEA-COMP:10001"/>
        <dbReference type="ChEBI" id="CHEBI:15361"/>
        <dbReference type="ChEBI" id="CHEBI:24996"/>
        <dbReference type="ChEBI" id="CHEBI:33737"/>
        <dbReference type="ChEBI" id="CHEBI:33738"/>
        <dbReference type="ChEBI" id="CHEBI:57540"/>
        <dbReference type="ChEBI" id="CHEBI:57945"/>
        <dbReference type="EC" id="1.1.1.436"/>
    </reaction>
</comment>
<comment type="cofactor">
    <cofactor evidence="2">
        <name>FAD</name>
        <dbReference type="ChEBI" id="CHEBI:57692"/>
    </cofactor>
    <text evidence="2">Binds 1 FAD per subunit.</text>
</comment>
<comment type="cofactor">
    <cofactor evidence="1">
        <name>[4Fe-4S] cluster</name>
        <dbReference type="ChEBI" id="CHEBI:49883"/>
    </cofactor>
</comment>
<comment type="activity regulation">
    <text evidence="3">Activity is stimulated by divalent cations. Highest stimulation is observed with Ca(2+).</text>
</comment>
<comment type="biophysicochemical properties">
    <kinetics>
        <KM evidence="3">31 uM for ferredoxin</KM>
    </kinetics>
    <phDependence>
        <text evidence="3">Optimum pH is 7.0.</text>
    </phDependence>
    <temperatureDependence>
        <text evidence="3">Optimum temperature is between 20 and 30 degrees Celsius.</text>
    </temperatureDependence>
</comment>
<comment type="subunit">
    <text evidence="3">Part of the stable heterotrimeric lactate dehydrogenase-Etf complex, which is formed by the lactate dehydrogenase LctD and the electron-transferring flavoprotein (Etf) alpha (LctC) and beta (LctB) subunits.</text>
</comment>
<comment type="subcellular location">
    <subcellularLocation>
        <location evidence="3">Cytoplasm</location>
    </subcellularLocation>
</comment>
<comment type="similarity">
    <text evidence="5">Belongs to the ETF alpha-subunit/FixB family.</text>
</comment>
<keyword id="KW-0002">3D-structure</keyword>
<keyword id="KW-0004">4Fe-4S</keyword>
<keyword id="KW-0963">Cytoplasm</keyword>
<keyword id="KW-0274">FAD</keyword>
<keyword id="KW-0285">Flavoprotein</keyword>
<keyword id="KW-0408">Iron</keyword>
<keyword id="KW-0411">Iron-sulfur</keyword>
<keyword id="KW-0479">Metal-binding</keyword>
<keyword id="KW-0520">NAD</keyword>
<keyword id="KW-0560">Oxidoreductase</keyword>
<keyword id="KW-1185">Reference proteome</keyword>
<organism>
    <name type="scientific">Acetobacterium woodii (strain ATCC 29683 / DSM 1030 / JCM 2381 / KCTC 1655 / WB1)</name>
    <dbReference type="NCBI Taxonomy" id="931626"/>
    <lineage>
        <taxon>Bacteria</taxon>
        <taxon>Bacillati</taxon>
        <taxon>Bacillota</taxon>
        <taxon>Clostridia</taxon>
        <taxon>Eubacteriales</taxon>
        <taxon>Eubacteriaceae</taxon>
        <taxon>Acetobacterium</taxon>
    </lineage>
</organism>
<gene>
    <name evidence="4" type="primary">lctC</name>
    <name evidence="6" type="synonym">etfA</name>
    <name evidence="6" type="ordered locus">Awo_c08720</name>
</gene>
<evidence type="ECO:0000250" key="1">
    <source>
        <dbReference type="UniProtKB" id="H6LGM8"/>
    </source>
</evidence>
<evidence type="ECO:0000250" key="2">
    <source>
        <dbReference type="UniProtKB" id="P13804"/>
    </source>
</evidence>
<evidence type="ECO:0000269" key="3">
    <source>
    </source>
</evidence>
<evidence type="ECO:0000303" key="4">
    <source>
    </source>
</evidence>
<evidence type="ECO:0000305" key="5"/>
<evidence type="ECO:0000312" key="6">
    <source>
        <dbReference type="EMBL" id="AFA47663.1"/>
    </source>
</evidence>
<evidence type="ECO:0007829" key="7">
    <source>
        <dbReference type="PDB" id="7QH2"/>
    </source>
</evidence>
<protein>
    <recommendedName>
        <fullName evidence="5">Lactate dehydrogenase (NAD(+),ferredoxin) subunit LctC</fullName>
        <ecNumber evidence="3">1.1.1.436</ecNumber>
    </recommendedName>
    <alternativeName>
        <fullName evidence="1">Electron transfer flavoprotein large subunit</fullName>
    </alternativeName>
    <alternativeName>
        <fullName evidence="1">Electron transfer flavoprotein subunit alpha</fullName>
        <shortName evidence="5">EtfA</shortName>
    </alternativeName>
    <alternativeName>
        <fullName evidence="5">Lactate dehydrogenase-Etf complex subunit LctC</fullName>
    </alternativeName>
</protein>
<dbReference type="EC" id="1.1.1.436" evidence="3"/>
<dbReference type="EMBL" id="CP002987">
    <property type="protein sequence ID" value="AFA47663.1"/>
    <property type="molecule type" value="Genomic_DNA"/>
</dbReference>
<dbReference type="RefSeq" id="WP_014355266.1">
    <property type="nucleotide sequence ID" value="NC_016894.1"/>
</dbReference>
<dbReference type="PDB" id="7QH2">
    <property type="method" value="EM"/>
    <property type="resolution" value="2.43 A"/>
    <property type="chains" value="A/D=1-418"/>
</dbReference>
<dbReference type="PDBsum" id="7QH2"/>
<dbReference type="EMDB" id="EMD-13960"/>
<dbReference type="SMR" id="H6LBB1"/>
<dbReference type="STRING" id="931626.Awo_c08720"/>
<dbReference type="KEGG" id="awo:Awo_c08720"/>
<dbReference type="eggNOG" id="COG1145">
    <property type="taxonomic scope" value="Bacteria"/>
</dbReference>
<dbReference type="eggNOG" id="COG2025">
    <property type="taxonomic scope" value="Bacteria"/>
</dbReference>
<dbReference type="HOGENOM" id="CLU_034178_1_1_9"/>
<dbReference type="OrthoDB" id="9770286at2"/>
<dbReference type="BioCyc" id="MetaCyc:MONOMER-21371"/>
<dbReference type="BRENDA" id="1.3.1.110">
    <property type="organism ID" value="52"/>
</dbReference>
<dbReference type="Proteomes" id="UP000007177">
    <property type="component" value="Chromosome"/>
</dbReference>
<dbReference type="GO" id="GO:0005737">
    <property type="term" value="C:cytoplasm"/>
    <property type="evidence" value="ECO:0007669"/>
    <property type="project" value="UniProtKB-SubCell"/>
</dbReference>
<dbReference type="GO" id="GO:0051539">
    <property type="term" value="F:4 iron, 4 sulfur cluster binding"/>
    <property type="evidence" value="ECO:0007669"/>
    <property type="project" value="UniProtKB-KW"/>
</dbReference>
<dbReference type="GO" id="GO:0009055">
    <property type="term" value="F:electron transfer activity"/>
    <property type="evidence" value="ECO:0007669"/>
    <property type="project" value="InterPro"/>
</dbReference>
<dbReference type="GO" id="GO:0050660">
    <property type="term" value="F:flavin adenine dinucleotide binding"/>
    <property type="evidence" value="ECO:0007669"/>
    <property type="project" value="InterPro"/>
</dbReference>
<dbReference type="GO" id="GO:0046872">
    <property type="term" value="F:metal ion binding"/>
    <property type="evidence" value="ECO:0007669"/>
    <property type="project" value="UniProtKB-KW"/>
</dbReference>
<dbReference type="GO" id="GO:0016491">
    <property type="term" value="F:oxidoreductase activity"/>
    <property type="evidence" value="ECO:0007669"/>
    <property type="project" value="UniProtKB-KW"/>
</dbReference>
<dbReference type="GO" id="GO:0033539">
    <property type="term" value="P:fatty acid beta-oxidation using acyl-CoA dehydrogenase"/>
    <property type="evidence" value="ECO:0007669"/>
    <property type="project" value="TreeGrafter"/>
</dbReference>
<dbReference type="CDD" id="cd01715">
    <property type="entry name" value="ETF_alpha"/>
    <property type="match status" value="1"/>
</dbReference>
<dbReference type="Gene3D" id="3.30.70.20">
    <property type="match status" value="1"/>
</dbReference>
<dbReference type="Gene3D" id="3.40.50.620">
    <property type="entry name" value="HUPs"/>
    <property type="match status" value="1"/>
</dbReference>
<dbReference type="Gene3D" id="3.40.50.1220">
    <property type="entry name" value="TPP-binding domain"/>
    <property type="match status" value="1"/>
</dbReference>
<dbReference type="InterPro" id="IPR029035">
    <property type="entry name" value="DHS-like_NAD/FAD-binding_dom"/>
</dbReference>
<dbReference type="InterPro" id="IPR014730">
    <property type="entry name" value="ETF_a/b_N"/>
</dbReference>
<dbReference type="InterPro" id="IPR001308">
    <property type="entry name" value="ETF_a/FixB"/>
</dbReference>
<dbReference type="InterPro" id="IPR033947">
    <property type="entry name" value="ETF_alpha_N"/>
</dbReference>
<dbReference type="InterPro" id="IPR014731">
    <property type="entry name" value="ETF_asu_C"/>
</dbReference>
<dbReference type="InterPro" id="IPR014729">
    <property type="entry name" value="Rossmann-like_a/b/a_fold"/>
</dbReference>
<dbReference type="PANTHER" id="PTHR43153">
    <property type="entry name" value="ELECTRON TRANSFER FLAVOPROTEIN ALPHA"/>
    <property type="match status" value="1"/>
</dbReference>
<dbReference type="PANTHER" id="PTHR43153:SF1">
    <property type="entry name" value="ELECTRON TRANSFER FLAVOPROTEIN SUBUNIT ALPHA, MITOCHONDRIAL"/>
    <property type="match status" value="1"/>
</dbReference>
<dbReference type="Pfam" id="PF01012">
    <property type="entry name" value="ETF"/>
    <property type="match status" value="1"/>
</dbReference>
<dbReference type="Pfam" id="PF00766">
    <property type="entry name" value="ETF_alpha"/>
    <property type="match status" value="1"/>
</dbReference>
<dbReference type="SMART" id="SM00893">
    <property type="entry name" value="ETF"/>
    <property type="match status" value="1"/>
</dbReference>
<dbReference type="SUPFAM" id="SSF52402">
    <property type="entry name" value="Adenine nucleotide alpha hydrolases-like"/>
    <property type="match status" value="1"/>
</dbReference>
<dbReference type="SUPFAM" id="SSF52467">
    <property type="entry name" value="DHS-like NAD/FAD-binding domain"/>
    <property type="match status" value="1"/>
</dbReference>
<name>LCTC_ACEWD</name>
<feature type="chain" id="PRO_0000453361" description="Lactate dehydrogenase (NAD(+),ferredoxin) subunit LctC">
    <location>
        <begin position="1"/>
        <end position="418"/>
    </location>
</feature>
<feature type="binding site" evidence="2">
    <location>
        <position position="285"/>
    </location>
    <ligand>
        <name>FAD</name>
        <dbReference type="ChEBI" id="CHEBI:57692"/>
    </ligand>
</feature>
<feature type="binding site" evidence="2">
    <location>
        <begin position="325"/>
        <end position="328"/>
    </location>
    <ligand>
        <name>FAD</name>
        <dbReference type="ChEBI" id="CHEBI:57692"/>
    </ligand>
</feature>
<feature type="binding site" evidence="2">
    <location>
        <begin position="343"/>
        <end position="348"/>
    </location>
    <ligand>
        <name>FAD</name>
        <dbReference type="ChEBI" id="CHEBI:57692"/>
    </ligand>
</feature>
<feature type="binding site" evidence="2">
    <location>
        <position position="362"/>
    </location>
    <ligand>
        <name>FAD</name>
        <dbReference type="ChEBI" id="CHEBI:57692"/>
    </ligand>
</feature>
<feature type="binding site" evidence="2">
    <location>
        <begin position="380"/>
        <end position="381"/>
    </location>
    <ligand>
        <name>FAD</name>
        <dbReference type="ChEBI" id="CHEBI:57692"/>
    </ligand>
</feature>
<feature type="strand" evidence="7">
    <location>
        <begin position="74"/>
        <end position="77"/>
    </location>
</feature>
<feature type="helix" evidence="7">
    <location>
        <begin position="88"/>
        <end position="103"/>
    </location>
</feature>
<feature type="strand" evidence="7">
    <location>
        <begin position="107"/>
        <end position="112"/>
    </location>
</feature>
<feature type="helix" evidence="7">
    <location>
        <begin position="117"/>
        <end position="119"/>
    </location>
</feature>
<feature type="helix" evidence="7">
    <location>
        <begin position="121"/>
        <end position="124"/>
    </location>
</feature>
<feature type="turn" evidence="7">
    <location>
        <begin position="125"/>
        <end position="127"/>
    </location>
</feature>
<feature type="strand" evidence="7">
    <location>
        <begin position="129"/>
        <end position="134"/>
    </location>
</feature>
<feature type="helix" evidence="7">
    <location>
        <begin position="144"/>
        <end position="158"/>
    </location>
</feature>
<feature type="strand" evidence="7">
    <location>
        <begin position="161"/>
        <end position="168"/>
    </location>
</feature>
<feature type="helix" evidence="7">
    <location>
        <begin position="171"/>
        <end position="182"/>
    </location>
</feature>
<feature type="strand" evidence="7">
    <location>
        <begin position="186"/>
        <end position="195"/>
    </location>
</feature>
<feature type="strand" evidence="7">
    <location>
        <begin position="201"/>
        <end position="207"/>
    </location>
</feature>
<feature type="turn" evidence="7">
    <location>
        <begin position="208"/>
        <end position="211"/>
    </location>
</feature>
<feature type="strand" evidence="7">
    <location>
        <begin position="212"/>
        <end position="228"/>
    </location>
</feature>
<feature type="strand" evidence="7">
    <location>
        <begin position="245"/>
        <end position="248"/>
    </location>
</feature>
<feature type="turn" evidence="7">
    <location>
        <begin position="253"/>
        <end position="256"/>
    </location>
</feature>
<feature type="strand" evidence="7">
    <location>
        <begin position="261"/>
        <end position="267"/>
    </location>
</feature>
<feature type="helix" evidence="7">
    <location>
        <begin position="274"/>
        <end position="276"/>
    </location>
</feature>
<feature type="strand" evidence="7">
    <location>
        <begin position="278"/>
        <end position="283"/>
    </location>
</feature>
<feature type="helix" evidence="7">
    <location>
        <begin position="290"/>
        <end position="292"/>
    </location>
</feature>
<feature type="helix" evidence="7">
    <location>
        <begin position="293"/>
        <end position="300"/>
    </location>
</feature>
<feature type="turn" evidence="7">
    <location>
        <begin position="301"/>
        <end position="304"/>
    </location>
</feature>
<feature type="strand" evidence="7">
    <location>
        <begin position="306"/>
        <end position="309"/>
    </location>
</feature>
<feature type="helix" evidence="7">
    <location>
        <begin position="311"/>
        <end position="315"/>
    </location>
</feature>
<feature type="helix" evidence="7">
    <location>
        <begin position="321"/>
        <end position="323"/>
    </location>
</feature>
<feature type="strand" evidence="7">
    <location>
        <begin position="324"/>
        <end position="326"/>
    </location>
</feature>
<feature type="strand" evidence="7">
    <location>
        <begin position="335"/>
        <end position="341"/>
    </location>
</feature>
<feature type="helix" evidence="7">
    <location>
        <begin position="346"/>
        <end position="349"/>
    </location>
</feature>
<feature type="turn" evidence="7">
    <location>
        <begin position="350"/>
        <end position="354"/>
    </location>
</feature>
<feature type="strand" evidence="7">
    <location>
        <begin position="358"/>
        <end position="363"/>
    </location>
</feature>
<feature type="helix" evidence="7">
    <location>
        <begin position="368"/>
        <end position="371"/>
    </location>
</feature>
<feature type="strand" evidence="7">
    <location>
        <begin position="374"/>
        <end position="379"/>
    </location>
</feature>
<feature type="helix" evidence="7">
    <location>
        <begin position="381"/>
        <end position="397"/>
    </location>
</feature>
<sequence length="418" mass="46170">MAGIKIIKENVDRETFEALAEICPFDAFSYENDKLEVTAACKMCKMCLKKGPEGVLILEEDEKVAIDKSLYRGITVYVDHIEGQIHPVTFELIGKARELAAVIGHPVYALLMGTNITEKADELLKYGVDKVFVYDKPELKHFVIEPYANVLEDFIEKVKPSSILVGATNVGRSLAPRVAARYRTGLTADCTILEMKENTDLVQIRPAFGGNIMAQIVTENTRPQFCTVRYKVFTAPERVNEPWGDVEMMDIEKAKLVSAIEVMEVIKKEKGIDLSEAETIVAVGRGVKCEKDLDMIHEFAEKIGATVACTRPGIEAGWFDARLQIGLSGRTVKPKLIIALGISGAVQFAAGMQNSEYIIAINSDPKAPIFNIAHCGMVGDLYEILPELLTMIEGPENNKDTETISIPEAIETPERMVV</sequence>
<reference key="1">
    <citation type="submission" date="2011-07" db="EMBL/GenBank/DDBJ databases">
        <title>Complete genome sequence of Acetobacterium woodii.</title>
        <authorList>
            <person name="Poehlein A."/>
            <person name="Schmidt S."/>
            <person name="Kaster A.-K."/>
            <person name="Goenrich M."/>
            <person name="Vollmers J."/>
            <person name="Thuermer A."/>
            <person name="Gottschalk G."/>
            <person name="Thauer R.K."/>
            <person name="Daniel R."/>
            <person name="Mueller V."/>
        </authorList>
    </citation>
    <scope>NUCLEOTIDE SEQUENCE [LARGE SCALE GENOMIC DNA]</scope>
    <source>
        <strain>ATCC 29683 / DSM 1030 / JCM 2381 / KCTC 1655 / WB1</strain>
    </source>
</reference>
<reference key="2">
    <citation type="journal article" date="2015" name="Environ. Microbiol.">
        <title>A novel mode of lactate metabolism in strictly anaerobic bacteria.</title>
        <authorList>
            <person name="Weghoff M.C."/>
            <person name="Bertsch J."/>
            <person name="Mueller V."/>
        </authorList>
    </citation>
    <scope>FUNCTION</scope>
    <scope>CATALYTIC ACTIVITY</scope>
    <scope>ACTIVITY REGULATION</scope>
    <scope>BIOPHYSICOCHEMICAL PROPERTIES</scope>
    <scope>SUBUNIT</scope>
    <scope>SUBCELLULAR LOCATION</scope>
    <source>
        <strain>ATCC 29683 / DSM 1030 / JCM 2381 / KCTC 1655 / WB1</strain>
    </source>
</reference>